<name>HFA4B_ORYSJ</name>
<proteinExistence type="evidence at transcript level"/>
<comment type="function">
    <text evidence="1">Transcriptional regulator that specifically binds DNA of heat shock promoter elements (HSE).</text>
</comment>
<comment type="subunit">
    <text evidence="1">Homotrimer.</text>
</comment>
<comment type="subcellular location">
    <subcellularLocation>
        <location evidence="5">Cytoplasm</location>
    </subcellularLocation>
    <subcellularLocation>
        <location evidence="5">Nucleus</location>
    </subcellularLocation>
</comment>
<comment type="domain">
    <text evidence="4">The hydrophobic-rich region (HR-A/B) corresponds to the oligomerization domain. AHA motifs are transcriptional activator elements.</text>
</comment>
<comment type="PTM">
    <text evidence="1">Exhibits temperature-dependent phosphorylation.</text>
</comment>
<comment type="similarity">
    <text evidence="5">Belongs to the HSF family. Class A subfamily.</text>
</comment>
<keyword id="KW-0175">Coiled coil</keyword>
<keyword id="KW-0963">Cytoplasm</keyword>
<keyword id="KW-0238">DNA-binding</keyword>
<keyword id="KW-0539">Nucleus</keyword>
<keyword id="KW-0597">Phosphoprotein</keyword>
<keyword id="KW-1185">Reference proteome</keyword>
<keyword id="KW-0346">Stress response</keyword>
<keyword id="KW-0804">Transcription</keyword>
<keyword id="KW-0805">Transcription regulation</keyword>
<organism>
    <name type="scientific">Oryza sativa subsp. japonica</name>
    <name type="common">Rice</name>
    <dbReference type="NCBI Taxonomy" id="39947"/>
    <lineage>
        <taxon>Eukaryota</taxon>
        <taxon>Viridiplantae</taxon>
        <taxon>Streptophyta</taxon>
        <taxon>Embryophyta</taxon>
        <taxon>Tracheophyta</taxon>
        <taxon>Spermatophyta</taxon>
        <taxon>Magnoliopsida</taxon>
        <taxon>Liliopsida</taxon>
        <taxon>Poales</taxon>
        <taxon>Poaceae</taxon>
        <taxon>BOP clade</taxon>
        <taxon>Oryzoideae</taxon>
        <taxon>Oryzeae</taxon>
        <taxon>Oryzinae</taxon>
        <taxon>Oryza</taxon>
        <taxon>Oryza sativa</taxon>
    </lineage>
</organism>
<evidence type="ECO:0000250" key="1"/>
<evidence type="ECO:0000255" key="2"/>
<evidence type="ECO:0000256" key="3">
    <source>
        <dbReference type="SAM" id="MobiDB-lite"/>
    </source>
</evidence>
<evidence type="ECO:0000269" key="4">
    <source>
    </source>
</evidence>
<evidence type="ECO:0000305" key="5"/>
<evidence type="ECO:0000312" key="6">
    <source>
        <dbReference type="EMBL" id="EEE55381.1"/>
    </source>
</evidence>
<dbReference type="EMBL" id="AY344491">
    <property type="protein sequence ID" value="AAQ23063.1"/>
    <property type="molecule type" value="mRNA"/>
</dbReference>
<dbReference type="EMBL" id="AP003076">
    <property type="protein sequence ID" value="BAB56047.1"/>
    <property type="molecule type" value="Genomic_DNA"/>
</dbReference>
<dbReference type="EMBL" id="AP008207">
    <property type="protein sequence ID" value="BAF06161.1"/>
    <property type="molecule type" value="Genomic_DNA"/>
</dbReference>
<dbReference type="EMBL" id="AP014957">
    <property type="protein sequence ID" value="BAS74346.1"/>
    <property type="molecule type" value="Genomic_DNA"/>
</dbReference>
<dbReference type="EMBL" id="CM000138">
    <property type="protein sequence ID" value="EEE55381.1"/>
    <property type="molecule type" value="Genomic_DNA"/>
</dbReference>
<dbReference type="EMBL" id="AK109856">
    <property type="protein sequence ID" value="BAG98932.1"/>
    <property type="molecule type" value="mRNA"/>
</dbReference>
<dbReference type="RefSeq" id="XP_015615651.1">
    <property type="nucleotide sequence ID" value="XM_015760165.1"/>
</dbReference>
<dbReference type="SMR" id="Q94J16"/>
<dbReference type="FunCoup" id="Q94J16">
    <property type="interactions" value="319"/>
</dbReference>
<dbReference type="STRING" id="39947.Q94J16"/>
<dbReference type="PaxDb" id="39947-Q94J16"/>
<dbReference type="EnsemblPlants" id="Os01t0749300-01">
    <property type="protein sequence ID" value="Os01t0749300-01"/>
    <property type="gene ID" value="Os01g0749300"/>
</dbReference>
<dbReference type="EnsemblPlants" id="Os01t0749300-02">
    <property type="protein sequence ID" value="Os01t0749300-02"/>
    <property type="gene ID" value="Os01g0749300"/>
</dbReference>
<dbReference type="Gramene" id="Os01t0749300-01">
    <property type="protein sequence ID" value="Os01t0749300-01"/>
    <property type="gene ID" value="Os01g0749300"/>
</dbReference>
<dbReference type="Gramene" id="Os01t0749300-02">
    <property type="protein sequence ID" value="Os01t0749300-02"/>
    <property type="gene ID" value="Os01g0749300"/>
</dbReference>
<dbReference type="KEGG" id="dosa:Os01g0749300"/>
<dbReference type="eggNOG" id="KOG0627">
    <property type="taxonomic scope" value="Eukaryota"/>
</dbReference>
<dbReference type="HOGENOM" id="CLU_030308_0_0_1"/>
<dbReference type="InParanoid" id="Q94J16"/>
<dbReference type="OMA" id="MVNSPTH"/>
<dbReference type="OrthoDB" id="60033at2759"/>
<dbReference type="Proteomes" id="UP000000763">
    <property type="component" value="Chromosome 1"/>
</dbReference>
<dbReference type="Proteomes" id="UP000007752">
    <property type="component" value="Chromosome 1"/>
</dbReference>
<dbReference type="Proteomes" id="UP000059680">
    <property type="component" value="Chromosome 1"/>
</dbReference>
<dbReference type="GO" id="GO:0005737">
    <property type="term" value="C:cytoplasm"/>
    <property type="evidence" value="ECO:0007669"/>
    <property type="project" value="UniProtKB-SubCell"/>
</dbReference>
<dbReference type="GO" id="GO:0005634">
    <property type="term" value="C:nucleus"/>
    <property type="evidence" value="ECO:0000318"/>
    <property type="project" value="GO_Central"/>
</dbReference>
<dbReference type="GO" id="GO:0003700">
    <property type="term" value="F:DNA-binding transcription factor activity"/>
    <property type="evidence" value="ECO:0000318"/>
    <property type="project" value="GO_Central"/>
</dbReference>
<dbReference type="GO" id="GO:0043565">
    <property type="term" value="F:sequence-specific DNA binding"/>
    <property type="evidence" value="ECO:0007669"/>
    <property type="project" value="InterPro"/>
</dbReference>
<dbReference type="GO" id="GO:0034605">
    <property type="term" value="P:cellular response to heat"/>
    <property type="evidence" value="ECO:0000318"/>
    <property type="project" value="GO_Central"/>
</dbReference>
<dbReference type="GO" id="GO:0006357">
    <property type="term" value="P:regulation of transcription by RNA polymerase II"/>
    <property type="evidence" value="ECO:0000318"/>
    <property type="project" value="GO_Central"/>
</dbReference>
<dbReference type="FunFam" id="1.10.10.10:FF:000057">
    <property type="entry name" value="Heat shock transcription factor 1"/>
    <property type="match status" value="1"/>
</dbReference>
<dbReference type="Gene3D" id="1.10.10.10">
    <property type="entry name" value="Winged helix-like DNA-binding domain superfamily/Winged helix DNA-binding domain"/>
    <property type="match status" value="1"/>
</dbReference>
<dbReference type="InterPro" id="IPR000232">
    <property type="entry name" value="HSF_DNA-bd"/>
</dbReference>
<dbReference type="InterPro" id="IPR036388">
    <property type="entry name" value="WH-like_DNA-bd_sf"/>
</dbReference>
<dbReference type="InterPro" id="IPR036390">
    <property type="entry name" value="WH_DNA-bd_sf"/>
</dbReference>
<dbReference type="PANTHER" id="PTHR10015">
    <property type="entry name" value="HEAT SHOCK TRANSCRIPTION FACTOR"/>
    <property type="match status" value="1"/>
</dbReference>
<dbReference type="PANTHER" id="PTHR10015:SF426">
    <property type="entry name" value="HEAT STRESS TRANSCRIPTION FACTOR A-4B"/>
    <property type="match status" value="1"/>
</dbReference>
<dbReference type="Pfam" id="PF00447">
    <property type="entry name" value="HSF_DNA-bind"/>
    <property type="match status" value="1"/>
</dbReference>
<dbReference type="PRINTS" id="PR00056">
    <property type="entry name" value="HSFDOMAIN"/>
</dbReference>
<dbReference type="SMART" id="SM00415">
    <property type="entry name" value="HSF"/>
    <property type="match status" value="1"/>
</dbReference>
<dbReference type="SUPFAM" id="SSF46785">
    <property type="entry name" value="Winged helix' DNA-binding domain"/>
    <property type="match status" value="1"/>
</dbReference>
<dbReference type="PROSITE" id="PS00434">
    <property type="entry name" value="HSF_DOMAIN"/>
    <property type="match status" value="1"/>
</dbReference>
<accession>Q94J16</accession>
<accession>B7F2T5</accession>
<protein>
    <recommendedName>
        <fullName>Heat stress transcription factor A-4b</fullName>
    </recommendedName>
    <alternativeName>
        <fullName>Heat stress transcription factor 4</fullName>
        <shortName>OsHsf-04</shortName>
    </alternativeName>
    <alternativeName>
        <fullName>Heat stress transcription factor 9</fullName>
        <shortName>rHsf9</shortName>
    </alternativeName>
</protein>
<feature type="chain" id="PRO_0000350827" description="Heat stress transcription factor A-4b">
    <location>
        <begin position="1"/>
        <end position="440"/>
    </location>
</feature>
<feature type="region of interest" description="Hydrophobic repeat HR-A/B">
    <location>
        <begin position="133"/>
        <end position="183"/>
    </location>
</feature>
<feature type="region of interest" description="Disordered" evidence="3">
    <location>
        <begin position="264"/>
        <end position="417"/>
    </location>
</feature>
<feature type="coiled-coil region" evidence="2">
    <location>
        <begin position="121"/>
        <end position="181"/>
    </location>
</feature>
<feature type="short sequence motif" description="Nuclear export signal" evidence="2">
    <location>
        <begin position="158"/>
        <end position="163"/>
    </location>
</feature>
<feature type="short sequence motif" description="Nuclear localization signal" evidence="2">
    <location>
        <begin position="200"/>
        <end position="204"/>
    </location>
</feature>
<feature type="short sequence motif" description="AHA">
    <location>
        <begin position="375"/>
        <end position="384"/>
    </location>
</feature>
<feature type="compositionally biased region" description="Polar residues" evidence="3">
    <location>
        <begin position="295"/>
        <end position="305"/>
    </location>
</feature>
<feature type="compositionally biased region" description="Basic and acidic residues" evidence="3">
    <location>
        <begin position="333"/>
        <end position="343"/>
    </location>
</feature>
<feature type="compositionally biased region" description="Polar residues" evidence="3">
    <location>
        <begin position="380"/>
        <end position="390"/>
    </location>
</feature>
<feature type="compositionally biased region" description="Basic and acidic residues" evidence="3">
    <location>
        <begin position="391"/>
        <end position="417"/>
    </location>
</feature>
<sequence>MEGGGGGGSLPPFLSKTYEMVDDPSTDAVVGWTPAGTSFVVANQPEFCRDLLPKYFKHNNFSSFVRQLNTYGFRKVDPEQWEFANEDFIKGQRHRLKNIHRRKPIFSHSSHSQGAGPLTDNERKDYEEEIERLKSDNAALSSELQNNTLKKLNMEKRMQALEEKLFVVEDQQRSLISYVREIVKAPGFLSSFVQQQDHHRKKRRLPIPISFHEDANTQENQIMPCDLTNSPAQTFYRESFDKMESSLNSLENFLREASEEFGNDISYDDGVPGPSSTVVLTELHSPGESDPRVSSPPTRMRTSSAGAGDSHSSRDVAESTSCAESPPIPQMHSRVDTRAKVSEIDVNSEPAVTETGPSRDQPAEEPPAVTPGANDGFWQQFLTEQPGSSDAHQEAQSERRDGGNKVDEMKSGDRQHLWWGKRNVEQITEKLGLLTSTEKT</sequence>
<reference key="1">
    <citation type="submission" date="2003-07" db="EMBL/GenBank/DDBJ databases">
        <title>Isolation rice heat shock factor by modified yeast one-hybrid system method.</title>
        <authorList>
            <person name="Yao Q.-H."/>
            <person name="Peng R.-H."/>
            <person name="Xiong A.-S."/>
        </authorList>
    </citation>
    <scope>NUCLEOTIDE SEQUENCE [MRNA]</scope>
</reference>
<reference key="2">
    <citation type="journal article" date="2002" name="Nature">
        <title>The genome sequence and structure of rice chromosome 1.</title>
        <authorList>
            <person name="Sasaki T."/>
            <person name="Matsumoto T."/>
            <person name="Yamamoto K."/>
            <person name="Sakata K."/>
            <person name="Baba T."/>
            <person name="Katayose Y."/>
            <person name="Wu J."/>
            <person name="Niimura Y."/>
            <person name="Cheng Z."/>
            <person name="Nagamura Y."/>
            <person name="Antonio B.A."/>
            <person name="Kanamori H."/>
            <person name="Hosokawa S."/>
            <person name="Masukawa M."/>
            <person name="Arikawa K."/>
            <person name="Chiden Y."/>
            <person name="Hayashi M."/>
            <person name="Okamoto M."/>
            <person name="Ando T."/>
            <person name="Aoki H."/>
            <person name="Arita K."/>
            <person name="Hamada M."/>
            <person name="Harada C."/>
            <person name="Hijishita S."/>
            <person name="Honda M."/>
            <person name="Ichikawa Y."/>
            <person name="Idonuma A."/>
            <person name="Iijima M."/>
            <person name="Ikeda M."/>
            <person name="Ikeno M."/>
            <person name="Ito S."/>
            <person name="Ito T."/>
            <person name="Ito Y."/>
            <person name="Ito Y."/>
            <person name="Iwabuchi A."/>
            <person name="Kamiya K."/>
            <person name="Karasawa W."/>
            <person name="Katagiri S."/>
            <person name="Kikuta A."/>
            <person name="Kobayashi N."/>
            <person name="Kono I."/>
            <person name="Machita K."/>
            <person name="Maehara T."/>
            <person name="Mizuno H."/>
            <person name="Mizubayashi T."/>
            <person name="Mukai Y."/>
            <person name="Nagasaki H."/>
            <person name="Nakashima M."/>
            <person name="Nakama Y."/>
            <person name="Nakamichi Y."/>
            <person name="Nakamura M."/>
            <person name="Namiki N."/>
            <person name="Negishi M."/>
            <person name="Ohta I."/>
            <person name="Ono N."/>
            <person name="Saji S."/>
            <person name="Sakai K."/>
            <person name="Shibata M."/>
            <person name="Shimokawa T."/>
            <person name="Shomura A."/>
            <person name="Song J."/>
            <person name="Takazaki Y."/>
            <person name="Terasawa K."/>
            <person name="Tsuji K."/>
            <person name="Waki K."/>
            <person name="Yamagata H."/>
            <person name="Yamane H."/>
            <person name="Yoshiki S."/>
            <person name="Yoshihara R."/>
            <person name="Yukawa K."/>
            <person name="Zhong H."/>
            <person name="Iwama H."/>
            <person name="Endo T."/>
            <person name="Ito H."/>
            <person name="Hahn J.H."/>
            <person name="Kim H.-I."/>
            <person name="Eun M.-Y."/>
            <person name="Yano M."/>
            <person name="Jiang J."/>
            <person name="Gojobori T."/>
        </authorList>
    </citation>
    <scope>NUCLEOTIDE SEQUENCE [LARGE SCALE GENOMIC DNA]</scope>
    <source>
        <strain>cv. Nipponbare</strain>
    </source>
</reference>
<reference key="3">
    <citation type="journal article" date="2005" name="Nature">
        <title>The map-based sequence of the rice genome.</title>
        <authorList>
            <consortium name="International rice genome sequencing project (IRGSP)"/>
        </authorList>
    </citation>
    <scope>NUCLEOTIDE SEQUENCE [LARGE SCALE GENOMIC DNA]</scope>
    <source>
        <strain>cv. Nipponbare</strain>
    </source>
</reference>
<reference key="4">
    <citation type="journal article" date="2008" name="Nucleic Acids Res.">
        <title>The rice annotation project database (RAP-DB): 2008 update.</title>
        <authorList>
            <consortium name="The rice annotation project (RAP)"/>
        </authorList>
    </citation>
    <scope>GENOME REANNOTATION</scope>
    <source>
        <strain>cv. Nipponbare</strain>
    </source>
</reference>
<reference key="5">
    <citation type="journal article" date="2013" name="Rice">
        <title>Improvement of the Oryza sativa Nipponbare reference genome using next generation sequence and optical map data.</title>
        <authorList>
            <person name="Kawahara Y."/>
            <person name="de la Bastide M."/>
            <person name="Hamilton J.P."/>
            <person name="Kanamori H."/>
            <person name="McCombie W.R."/>
            <person name="Ouyang S."/>
            <person name="Schwartz D.C."/>
            <person name="Tanaka T."/>
            <person name="Wu J."/>
            <person name="Zhou S."/>
            <person name="Childs K.L."/>
            <person name="Davidson R.M."/>
            <person name="Lin H."/>
            <person name="Quesada-Ocampo L."/>
            <person name="Vaillancourt B."/>
            <person name="Sakai H."/>
            <person name="Lee S.S."/>
            <person name="Kim J."/>
            <person name="Numa H."/>
            <person name="Itoh T."/>
            <person name="Buell C.R."/>
            <person name="Matsumoto T."/>
        </authorList>
    </citation>
    <scope>GENOME REANNOTATION</scope>
    <source>
        <strain>cv. Nipponbare</strain>
    </source>
</reference>
<reference key="6">
    <citation type="journal article" date="2005" name="PLoS Biol.">
        <title>The genomes of Oryza sativa: a history of duplications.</title>
        <authorList>
            <person name="Yu J."/>
            <person name="Wang J."/>
            <person name="Lin W."/>
            <person name="Li S."/>
            <person name="Li H."/>
            <person name="Zhou J."/>
            <person name="Ni P."/>
            <person name="Dong W."/>
            <person name="Hu S."/>
            <person name="Zeng C."/>
            <person name="Zhang J."/>
            <person name="Zhang Y."/>
            <person name="Li R."/>
            <person name="Xu Z."/>
            <person name="Li S."/>
            <person name="Li X."/>
            <person name="Zheng H."/>
            <person name="Cong L."/>
            <person name="Lin L."/>
            <person name="Yin J."/>
            <person name="Geng J."/>
            <person name="Li G."/>
            <person name="Shi J."/>
            <person name="Liu J."/>
            <person name="Lv H."/>
            <person name="Li J."/>
            <person name="Wang J."/>
            <person name="Deng Y."/>
            <person name="Ran L."/>
            <person name="Shi X."/>
            <person name="Wang X."/>
            <person name="Wu Q."/>
            <person name="Li C."/>
            <person name="Ren X."/>
            <person name="Wang J."/>
            <person name="Wang X."/>
            <person name="Li D."/>
            <person name="Liu D."/>
            <person name="Zhang X."/>
            <person name="Ji Z."/>
            <person name="Zhao W."/>
            <person name="Sun Y."/>
            <person name="Zhang Z."/>
            <person name="Bao J."/>
            <person name="Han Y."/>
            <person name="Dong L."/>
            <person name="Ji J."/>
            <person name="Chen P."/>
            <person name="Wu S."/>
            <person name="Liu J."/>
            <person name="Xiao Y."/>
            <person name="Bu D."/>
            <person name="Tan J."/>
            <person name="Yang L."/>
            <person name="Ye C."/>
            <person name="Zhang J."/>
            <person name="Xu J."/>
            <person name="Zhou Y."/>
            <person name="Yu Y."/>
            <person name="Zhang B."/>
            <person name="Zhuang S."/>
            <person name="Wei H."/>
            <person name="Liu B."/>
            <person name="Lei M."/>
            <person name="Yu H."/>
            <person name="Li Y."/>
            <person name="Xu H."/>
            <person name="Wei S."/>
            <person name="He X."/>
            <person name="Fang L."/>
            <person name="Zhang Z."/>
            <person name="Zhang Y."/>
            <person name="Huang X."/>
            <person name="Su Z."/>
            <person name="Tong W."/>
            <person name="Li J."/>
            <person name="Tong Z."/>
            <person name="Li S."/>
            <person name="Ye J."/>
            <person name="Wang L."/>
            <person name="Fang L."/>
            <person name="Lei T."/>
            <person name="Chen C.-S."/>
            <person name="Chen H.-C."/>
            <person name="Xu Z."/>
            <person name="Li H."/>
            <person name="Huang H."/>
            <person name="Zhang F."/>
            <person name="Xu H."/>
            <person name="Li N."/>
            <person name="Zhao C."/>
            <person name="Li S."/>
            <person name="Dong L."/>
            <person name="Huang Y."/>
            <person name="Li L."/>
            <person name="Xi Y."/>
            <person name="Qi Q."/>
            <person name="Li W."/>
            <person name="Zhang B."/>
            <person name="Hu W."/>
            <person name="Zhang Y."/>
            <person name="Tian X."/>
            <person name="Jiao Y."/>
            <person name="Liang X."/>
            <person name="Jin J."/>
            <person name="Gao L."/>
            <person name="Zheng W."/>
            <person name="Hao B."/>
            <person name="Liu S.-M."/>
            <person name="Wang W."/>
            <person name="Yuan L."/>
            <person name="Cao M."/>
            <person name="McDermott J."/>
            <person name="Samudrala R."/>
            <person name="Wang J."/>
            <person name="Wong G.K.-S."/>
            <person name="Yang H."/>
        </authorList>
    </citation>
    <scope>NUCLEOTIDE SEQUENCE [LARGE SCALE GENOMIC DNA]</scope>
    <source>
        <strain>cv. Nipponbare</strain>
    </source>
</reference>
<reference key="7">
    <citation type="journal article" date="2003" name="Science">
        <title>Collection, mapping, and annotation of over 28,000 cDNA clones from japonica rice.</title>
        <authorList>
            <consortium name="The rice full-length cDNA consortium"/>
        </authorList>
    </citation>
    <scope>NUCLEOTIDE SEQUENCE [LARGE SCALE MRNA]</scope>
    <source>
        <strain>cv. Nipponbare</strain>
    </source>
</reference>
<reference key="8">
    <citation type="journal article" date="2004" name="J. Biosci.">
        <title>Heat stress response in plants: a complex game with chaperones and more than twenty heat stress transcription factors.</title>
        <authorList>
            <person name="Baniwal S.K."/>
            <person name="Bharti K."/>
            <person name="Chan K.Y."/>
            <person name="Fauth M."/>
            <person name="Ganguli A."/>
            <person name="Kotak S."/>
            <person name="Mishra S.K."/>
            <person name="Nover L."/>
            <person name="Port M."/>
            <person name="Scharf K.-D."/>
            <person name="Tripp J."/>
            <person name="Weber C."/>
            <person name="Zielinski D."/>
            <person name="von Koskull-Doering P."/>
        </authorList>
    </citation>
    <scope>GENE FAMILY</scope>
    <scope>NOMENCLATURE</scope>
</reference>
<reference key="9">
    <citation type="journal article" date="2008" name="J. Genet. Genomics">
        <title>Genome-wide analysis of heat shock transcription factor families in rice and Arabidopsis.</title>
        <authorList>
            <person name="Guo J."/>
            <person name="Wu J."/>
            <person name="Ji Q."/>
            <person name="Wang C."/>
            <person name="Luo L."/>
            <person name="Yuan Y."/>
            <person name="Wang Y."/>
            <person name="Wang J."/>
        </authorList>
    </citation>
    <scope>GENE FAMILY</scope>
    <scope>NOMENCLATURE</scope>
    <scope>DOMAIN AHA</scope>
</reference>
<gene>
    <name type="primary">HSFA4B</name>
    <name type="synonym">HSF04</name>
    <name type="synonym">HSF9</name>
    <name type="ordered locus">Os01g0749300</name>
    <name type="ordered locus">LOC_Os01g54550</name>
    <name evidence="6" type="ORF">OsJ_03456</name>
    <name type="ORF">P0481E12.39</name>
</gene>